<sequence length="101" mass="11719">MAKLSLINRDIKRAKLADKYAAKRAELKAIIDDQSKTDEERYQARLKLQQLPRNANPTRQRNRCVVTGRPRGVFRKFGLTRHKLREMAMKGEIPGITKASW</sequence>
<protein>
    <recommendedName>
        <fullName evidence="1">Small ribosomal subunit protein uS14</fullName>
    </recommendedName>
    <alternativeName>
        <fullName evidence="2">30S ribosomal protein S14</fullName>
    </alternativeName>
</protein>
<keyword id="KW-0687">Ribonucleoprotein</keyword>
<keyword id="KW-0689">Ribosomal protein</keyword>
<keyword id="KW-0694">RNA-binding</keyword>
<keyword id="KW-0699">rRNA-binding</keyword>
<feature type="chain" id="PRO_1000128315" description="Small ribosomal subunit protein uS14">
    <location>
        <begin position="1"/>
        <end position="101"/>
    </location>
</feature>
<dbReference type="EMBL" id="AM902716">
    <property type="protein sequence ID" value="CAP45289.1"/>
    <property type="molecule type" value="Genomic_DNA"/>
</dbReference>
<dbReference type="SMR" id="A9IHT7"/>
<dbReference type="STRING" id="94624.Bpet4937"/>
<dbReference type="KEGG" id="bpt:Bpet4937"/>
<dbReference type="eggNOG" id="COG0199">
    <property type="taxonomic scope" value="Bacteria"/>
</dbReference>
<dbReference type="Proteomes" id="UP000001225">
    <property type="component" value="Chromosome"/>
</dbReference>
<dbReference type="GO" id="GO:0005737">
    <property type="term" value="C:cytoplasm"/>
    <property type="evidence" value="ECO:0007669"/>
    <property type="project" value="UniProtKB-ARBA"/>
</dbReference>
<dbReference type="GO" id="GO:0015935">
    <property type="term" value="C:small ribosomal subunit"/>
    <property type="evidence" value="ECO:0007669"/>
    <property type="project" value="TreeGrafter"/>
</dbReference>
<dbReference type="GO" id="GO:0019843">
    <property type="term" value="F:rRNA binding"/>
    <property type="evidence" value="ECO:0007669"/>
    <property type="project" value="UniProtKB-UniRule"/>
</dbReference>
<dbReference type="GO" id="GO:0003735">
    <property type="term" value="F:structural constituent of ribosome"/>
    <property type="evidence" value="ECO:0007669"/>
    <property type="project" value="InterPro"/>
</dbReference>
<dbReference type="GO" id="GO:0006412">
    <property type="term" value="P:translation"/>
    <property type="evidence" value="ECO:0007669"/>
    <property type="project" value="UniProtKB-UniRule"/>
</dbReference>
<dbReference type="FunFam" id="1.10.287.1480:FF:000001">
    <property type="entry name" value="30S ribosomal protein S14"/>
    <property type="match status" value="1"/>
</dbReference>
<dbReference type="Gene3D" id="1.10.287.1480">
    <property type="match status" value="1"/>
</dbReference>
<dbReference type="HAMAP" id="MF_00537">
    <property type="entry name" value="Ribosomal_uS14_1"/>
    <property type="match status" value="1"/>
</dbReference>
<dbReference type="InterPro" id="IPR001209">
    <property type="entry name" value="Ribosomal_uS14"/>
</dbReference>
<dbReference type="InterPro" id="IPR023036">
    <property type="entry name" value="Ribosomal_uS14_bac/plastid"/>
</dbReference>
<dbReference type="NCBIfam" id="NF006477">
    <property type="entry name" value="PRK08881.1"/>
    <property type="match status" value="1"/>
</dbReference>
<dbReference type="PANTHER" id="PTHR19836">
    <property type="entry name" value="30S RIBOSOMAL PROTEIN S14"/>
    <property type="match status" value="1"/>
</dbReference>
<dbReference type="PANTHER" id="PTHR19836:SF19">
    <property type="entry name" value="SMALL RIBOSOMAL SUBUNIT PROTEIN US14M"/>
    <property type="match status" value="1"/>
</dbReference>
<dbReference type="Pfam" id="PF00253">
    <property type="entry name" value="Ribosomal_S14"/>
    <property type="match status" value="1"/>
</dbReference>
<dbReference type="SUPFAM" id="SSF57716">
    <property type="entry name" value="Glucocorticoid receptor-like (DNA-binding domain)"/>
    <property type="match status" value="1"/>
</dbReference>
<accession>A9IHT7</accession>
<gene>
    <name evidence="1" type="primary">rpsN</name>
    <name type="ordered locus">Bpet4937</name>
</gene>
<comment type="function">
    <text evidence="1">Binds 16S rRNA, required for the assembly of 30S particles and may also be responsible for determining the conformation of the 16S rRNA at the A site.</text>
</comment>
<comment type="subunit">
    <text evidence="1">Part of the 30S ribosomal subunit. Contacts proteins S3 and S10.</text>
</comment>
<comment type="similarity">
    <text evidence="1">Belongs to the universal ribosomal protein uS14 family.</text>
</comment>
<proteinExistence type="inferred from homology"/>
<name>RS14_BORPD</name>
<reference key="1">
    <citation type="journal article" date="2008" name="BMC Genomics">
        <title>The missing link: Bordetella petrii is endowed with both the metabolic versatility of environmental bacteria and virulence traits of pathogenic Bordetellae.</title>
        <authorList>
            <person name="Gross R."/>
            <person name="Guzman C.A."/>
            <person name="Sebaihia M."/>
            <person name="Martin dos Santos V.A.P."/>
            <person name="Pieper D.H."/>
            <person name="Koebnik R."/>
            <person name="Lechner M."/>
            <person name="Bartels D."/>
            <person name="Buhrmester J."/>
            <person name="Choudhuri J.V."/>
            <person name="Ebensen T."/>
            <person name="Gaigalat L."/>
            <person name="Herrmann S."/>
            <person name="Khachane A.N."/>
            <person name="Larisch C."/>
            <person name="Link S."/>
            <person name="Linke B."/>
            <person name="Meyer F."/>
            <person name="Mormann S."/>
            <person name="Nakunst D."/>
            <person name="Rueckert C."/>
            <person name="Schneiker-Bekel S."/>
            <person name="Schulze K."/>
            <person name="Voerholter F.-J."/>
            <person name="Yevsa T."/>
            <person name="Engle J.T."/>
            <person name="Goldman W.E."/>
            <person name="Puehler A."/>
            <person name="Goebel U.B."/>
            <person name="Goesmann A."/>
            <person name="Bloecker H."/>
            <person name="Kaiser O."/>
            <person name="Martinez-Arias R."/>
        </authorList>
    </citation>
    <scope>NUCLEOTIDE SEQUENCE [LARGE SCALE GENOMIC DNA]</scope>
    <source>
        <strain>ATCC BAA-461 / DSM 12804 / CCUG 43448</strain>
    </source>
</reference>
<evidence type="ECO:0000255" key="1">
    <source>
        <dbReference type="HAMAP-Rule" id="MF_00537"/>
    </source>
</evidence>
<evidence type="ECO:0000305" key="2"/>
<organism>
    <name type="scientific">Bordetella petrii (strain ATCC BAA-461 / DSM 12804 / CCUG 43448)</name>
    <dbReference type="NCBI Taxonomy" id="340100"/>
    <lineage>
        <taxon>Bacteria</taxon>
        <taxon>Pseudomonadati</taxon>
        <taxon>Pseudomonadota</taxon>
        <taxon>Betaproteobacteria</taxon>
        <taxon>Burkholderiales</taxon>
        <taxon>Alcaligenaceae</taxon>
        <taxon>Bordetella</taxon>
    </lineage>
</organism>